<sequence>MMKPMRYYLAFAAFIALYYIIPVNFRLLWQPDETRYAEISREMLASGDWIVPHFLGLRYFEKPIAGYWLNSLGQWLFGATNFGVRAGAILTTLLAAALVAWLTLRLWRDKRTALLASVIFLSLFAVYSIGTYAALAPMIALWLTAGMCCFWQGMQATTRMGRIGMFLLLGAICGLGVLTKGFLALAVPVISVLPWVIVQKRWKEFLLYGWLAVLSCLMVVVPWAIAIARREADFWHYFFWVEHIQRFAMSDARHKAPFWYYLPVLLVGSLPWLGLLPGALKLGWRERNGAFYLLGWTIMPLLFFSIAKGKLPTYILSCFAPIAILMARFVLHNVKEGVFALRVNGGINLAFGLIGIVAAFVVSSWGPLTSPVWTHIETYKVFCVWGVFTVWAFVGWYSLCNSQKYMLPAFCPLGLALLFGFSVPDRVMESKQPQFFVDMTRVPLASSRYILTDSVGVAAGLAWSLKRDDIMLYGYTGELRYGLSYPDVHDKFVKANDFNAWLNQHRQRGIITLVLSIAKDEDISALAIPPASNIDYQGRLVLIQYQPN</sequence>
<dbReference type="EC" id="2.4.2.43" evidence="1"/>
<dbReference type="EMBL" id="CP000880">
    <property type="protein sequence ID" value="ABX20525.1"/>
    <property type="molecule type" value="Genomic_DNA"/>
</dbReference>
<dbReference type="SMR" id="A9MJC5"/>
<dbReference type="STRING" id="41514.SARI_00599"/>
<dbReference type="CAZy" id="GT83">
    <property type="family name" value="Glycosyltransferase Family 83"/>
</dbReference>
<dbReference type="KEGG" id="ses:SARI_00599"/>
<dbReference type="HOGENOM" id="CLU_019200_2_1_6"/>
<dbReference type="UniPathway" id="UPA00037"/>
<dbReference type="Proteomes" id="UP000002084">
    <property type="component" value="Chromosome"/>
</dbReference>
<dbReference type="GO" id="GO:0005886">
    <property type="term" value="C:plasma membrane"/>
    <property type="evidence" value="ECO:0007669"/>
    <property type="project" value="UniProtKB-SubCell"/>
</dbReference>
<dbReference type="GO" id="GO:0103015">
    <property type="term" value="F:4-amino-4-deoxy-L-arabinose transferase activity"/>
    <property type="evidence" value="ECO:0007669"/>
    <property type="project" value="UniProtKB-EC"/>
</dbReference>
<dbReference type="GO" id="GO:0000030">
    <property type="term" value="F:mannosyltransferase activity"/>
    <property type="evidence" value="ECO:0007669"/>
    <property type="project" value="InterPro"/>
</dbReference>
<dbReference type="GO" id="GO:0009245">
    <property type="term" value="P:lipid A biosynthetic process"/>
    <property type="evidence" value="ECO:0007669"/>
    <property type="project" value="UniProtKB-UniRule"/>
</dbReference>
<dbReference type="GO" id="GO:0009103">
    <property type="term" value="P:lipopolysaccharide biosynthetic process"/>
    <property type="evidence" value="ECO:0007669"/>
    <property type="project" value="UniProtKB-KW"/>
</dbReference>
<dbReference type="GO" id="GO:0006493">
    <property type="term" value="P:protein O-linked glycosylation"/>
    <property type="evidence" value="ECO:0007669"/>
    <property type="project" value="InterPro"/>
</dbReference>
<dbReference type="GO" id="GO:0010041">
    <property type="term" value="P:response to iron(III) ion"/>
    <property type="evidence" value="ECO:0007669"/>
    <property type="project" value="TreeGrafter"/>
</dbReference>
<dbReference type="HAMAP" id="MF_01165">
    <property type="entry name" value="ArnT_transfer"/>
    <property type="match status" value="1"/>
</dbReference>
<dbReference type="InterPro" id="IPR022839">
    <property type="entry name" value="ArnT_tfrase"/>
</dbReference>
<dbReference type="InterPro" id="IPR003342">
    <property type="entry name" value="Glyco_trans_39/83"/>
</dbReference>
<dbReference type="InterPro" id="IPR050297">
    <property type="entry name" value="LipidA_mod_glycosyltrf_83"/>
</dbReference>
<dbReference type="NCBIfam" id="NF009784">
    <property type="entry name" value="PRK13279.1"/>
    <property type="match status" value="1"/>
</dbReference>
<dbReference type="PANTHER" id="PTHR33908">
    <property type="entry name" value="MANNOSYLTRANSFERASE YKCB-RELATED"/>
    <property type="match status" value="1"/>
</dbReference>
<dbReference type="PANTHER" id="PTHR33908:SF3">
    <property type="entry name" value="UNDECAPRENYL PHOSPHATE-ALPHA-4-AMINO-4-DEOXY-L-ARABINOSE ARABINOSYL TRANSFERASE"/>
    <property type="match status" value="1"/>
</dbReference>
<dbReference type="Pfam" id="PF02366">
    <property type="entry name" value="PMT"/>
    <property type="match status" value="1"/>
</dbReference>
<proteinExistence type="inferred from homology"/>
<reference key="1">
    <citation type="submission" date="2007-11" db="EMBL/GenBank/DDBJ databases">
        <authorList>
            <consortium name="The Salmonella enterica serovar Arizonae Genome Sequencing Project"/>
            <person name="McClelland M."/>
            <person name="Sanderson E.K."/>
            <person name="Porwollik S."/>
            <person name="Spieth J."/>
            <person name="Clifton W.S."/>
            <person name="Fulton R."/>
            <person name="Chunyan W."/>
            <person name="Wollam A."/>
            <person name="Shah N."/>
            <person name="Pepin K."/>
            <person name="Bhonagiri V."/>
            <person name="Nash W."/>
            <person name="Johnson M."/>
            <person name="Thiruvilangam P."/>
            <person name="Wilson R."/>
        </authorList>
    </citation>
    <scope>NUCLEOTIDE SEQUENCE [LARGE SCALE GENOMIC DNA]</scope>
    <source>
        <strain>ATCC BAA-731 / CDC346-86 / RSK2980</strain>
    </source>
</reference>
<accession>A9MJC5</accession>
<gene>
    <name evidence="1" type="primary">arnT</name>
    <name type="ordered locus">SARI_00599</name>
</gene>
<protein>
    <recommendedName>
        <fullName evidence="1">Undecaprenyl phosphate-alpha-4-amino-4-deoxy-L-arabinose arabinosyl transferase</fullName>
        <ecNumber evidence="1">2.4.2.43</ecNumber>
    </recommendedName>
    <alternativeName>
        <fullName evidence="1">4-amino-4-deoxy-L-arabinose lipid A transferase</fullName>
    </alternativeName>
    <alternativeName>
        <fullName evidence="1">Lipid IV(A) 4-amino-4-deoxy-L-arabinosyltransferase</fullName>
    </alternativeName>
    <alternativeName>
        <fullName evidence="1">Undecaprenyl phosphate-alpha-L-Ara4N transferase</fullName>
    </alternativeName>
</protein>
<keyword id="KW-0997">Cell inner membrane</keyword>
<keyword id="KW-1003">Cell membrane</keyword>
<keyword id="KW-0328">Glycosyltransferase</keyword>
<keyword id="KW-0441">Lipid A biosynthesis</keyword>
<keyword id="KW-0444">Lipid biosynthesis</keyword>
<keyword id="KW-0443">Lipid metabolism</keyword>
<keyword id="KW-0448">Lipopolysaccharide biosynthesis</keyword>
<keyword id="KW-0472">Membrane</keyword>
<keyword id="KW-1185">Reference proteome</keyword>
<keyword id="KW-0808">Transferase</keyword>
<keyword id="KW-0812">Transmembrane</keyword>
<keyword id="KW-1133">Transmembrane helix</keyword>
<comment type="function">
    <text evidence="1">Catalyzes the transfer of the L-Ara4N moiety of the glycolipid undecaprenyl phosphate-alpha-L-Ara4N to lipid A. The modified arabinose is attached to lipid A and is required for resistance to polymyxin and cationic antimicrobial peptides.</text>
</comment>
<comment type="catalytic activity">
    <reaction evidence="1">
        <text>4-amino-4-deoxy-alpha-L-arabinopyranosyl di-trans,octa-cis-undecaprenyl phosphate + lipid IVA = lipid IIA + di-trans,octa-cis-undecaprenyl phosphate.</text>
        <dbReference type="EC" id="2.4.2.43"/>
    </reaction>
</comment>
<comment type="pathway">
    <text evidence="1">Lipopolysaccharide metabolism; 4-amino-4-deoxy-beta-L-arabinose-lipid A biosynthesis.</text>
</comment>
<comment type="subcellular location">
    <subcellularLocation>
        <location evidence="1">Cell inner membrane</location>
        <topology evidence="1">Multi-pass membrane protein</topology>
    </subcellularLocation>
</comment>
<comment type="similarity">
    <text evidence="1">Belongs to the glycosyltransferase 83 family.</text>
</comment>
<organism>
    <name type="scientific">Salmonella arizonae (strain ATCC BAA-731 / CDC346-86 / RSK2980)</name>
    <dbReference type="NCBI Taxonomy" id="41514"/>
    <lineage>
        <taxon>Bacteria</taxon>
        <taxon>Pseudomonadati</taxon>
        <taxon>Pseudomonadota</taxon>
        <taxon>Gammaproteobacteria</taxon>
        <taxon>Enterobacterales</taxon>
        <taxon>Enterobacteriaceae</taxon>
        <taxon>Salmonella</taxon>
    </lineage>
</organism>
<evidence type="ECO:0000255" key="1">
    <source>
        <dbReference type="HAMAP-Rule" id="MF_01165"/>
    </source>
</evidence>
<name>ARNT_SALAR</name>
<feature type="chain" id="PRO_0000380025" description="Undecaprenyl phosphate-alpha-4-amino-4-deoxy-L-arabinose arabinosyl transferase">
    <location>
        <begin position="1"/>
        <end position="548"/>
    </location>
</feature>
<feature type="transmembrane region" description="Helical" evidence="1">
    <location>
        <begin position="9"/>
        <end position="29"/>
    </location>
</feature>
<feature type="transmembrane region" description="Helical" evidence="1">
    <location>
        <begin position="82"/>
        <end position="102"/>
    </location>
</feature>
<feature type="transmembrane region" description="Helical" evidence="1">
    <location>
        <begin position="113"/>
        <end position="130"/>
    </location>
</feature>
<feature type="transmembrane region" description="Helical" evidence="1">
    <location>
        <begin position="134"/>
        <end position="151"/>
    </location>
</feature>
<feature type="transmembrane region" description="Helical" evidence="1">
    <location>
        <begin position="163"/>
        <end position="183"/>
    </location>
</feature>
<feature type="transmembrane region" description="Helical" evidence="1">
    <location>
        <begin position="205"/>
        <end position="225"/>
    </location>
</feature>
<feature type="transmembrane region" description="Helical" evidence="1">
    <location>
        <begin position="256"/>
        <end position="276"/>
    </location>
</feature>
<feature type="transmembrane region" description="Helical" evidence="1">
    <location>
        <begin position="289"/>
        <end position="309"/>
    </location>
</feature>
<feature type="transmembrane region" description="Helical" evidence="1">
    <location>
        <begin position="311"/>
        <end position="331"/>
    </location>
</feature>
<feature type="transmembrane region" description="Helical" evidence="1">
    <location>
        <begin position="349"/>
        <end position="369"/>
    </location>
</feature>
<feature type="transmembrane region" description="Helical" evidence="1">
    <location>
        <begin position="381"/>
        <end position="401"/>
    </location>
</feature>
<feature type="transmembrane region" description="Helical" evidence="1">
    <location>
        <begin position="405"/>
        <end position="425"/>
    </location>
</feature>